<reference key="1">
    <citation type="journal article" date="2016" name="Genome Announc.">
        <title>Complete genome sequence of Alkaliphilus metalliredigens strain QYMF, an alkaliphilic and metal-reducing bacterium isolated from borax-contaminated leachate ponds.</title>
        <authorList>
            <person name="Hwang C."/>
            <person name="Copeland A."/>
            <person name="Lucas S."/>
            <person name="Lapidus A."/>
            <person name="Barry K."/>
            <person name="Detter J.C."/>
            <person name="Glavina Del Rio T."/>
            <person name="Hammon N."/>
            <person name="Israni S."/>
            <person name="Dalin E."/>
            <person name="Tice H."/>
            <person name="Pitluck S."/>
            <person name="Chertkov O."/>
            <person name="Brettin T."/>
            <person name="Bruce D."/>
            <person name="Han C."/>
            <person name="Schmutz J."/>
            <person name="Larimer F."/>
            <person name="Land M.L."/>
            <person name="Hauser L."/>
            <person name="Kyrpides N."/>
            <person name="Mikhailova N."/>
            <person name="Ye Q."/>
            <person name="Zhou J."/>
            <person name="Richardson P."/>
            <person name="Fields M.W."/>
        </authorList>
    </citation>
    <scope>NUCLEOTIDE SEQUENCE [LARGE SCALE GENOMIC DNA]</scope>
    <source>
        <strain>QYMF</strain>
    </source>
</reference>
<sequence>MLMPKRVKRRRVHRGRMTGQATKGNKVTYGEYGLMALEPAWITSNQIEAARIAMTRSIKRGGKVWIKIFPHKPVTKKPAETRMGAGKGSPEFWVAVVKPGRIMFELAGVPEDKAREALRLAMHKLPIKTKFVTRQEQEVKGGEADEN</sequence>
<comment type="function">
    <text evidence="1">Binds 23S rRNA and is also seen to make contacts with the A and possibly P site tRNAs.</text>
</comment>
<comment type="subunit">
    <text evidence="1">Part of the 50S ribosomal subunit.</text>
</comment>
<comment type="similarity">
    <text evidence="1">Belongs to the universal ribosomal protein uL16 family.</text>
</comment>
<keyword id="KW-1185">Reference proteome</keyword>
<keyword id="KW-0687">Ribonucleoprotein</keyword>
<keyword id="KW-0689">Ribosomal protein</keyword>
<keyword id="KW-0694">RNA-binding</keyword>
<keyword id="KW-0699">rRNA-binding</keyword>
<keyword id="KW-0820">tRNA-binding</keyword>
<organism>
    <name type="scientific">Alkaliphilus metalliredigens (strain QYMF)</name>
    <dbReference type="NCBI Taxonomy" id="293826"/>
    <lineage>
        <taxon>Bacteria</taxon>
        <taxon>Bacillati</taxon>
        <taxon>Bacillota</taxon>
        <taxon>Clostridia</taxon>
        <taxon>Peptostreptococcales</taxon>
        <taxon>Natronincolaceae</taxon>
        <taxon>Alkaliphilus</taxon>
    </lineage>
</organism>
<feature type="chain" id="PRO_1000067672" description="Large ribosomal subunit protein uL16">
    <location>
        <begin position="1"/>
        <end position="147"/>
    </location>
</feature>
<feature type="region of interest" description="Disordered" evidence="2">
    <location>
        <begin position="1"/>
        <end position="20"/>
    </location>
</feature>
<feature type="compositionally biased region" description="Basic residues" evidence="2">
    <location>
        <begin position="1"/>
        <end position="16"/>
    </location>
</feature>
<name>RL16_ALKMQ</name>
<proteinExistence type="inferred from homology"/>
<protein>
    <recommendedName>
        <fullName evidence="1">Large ribosomal subunit protein uL16</fullName>
    </recommendedName>
    <alternativeName>
        <fullName evidence="3">50S ribosomal protein L16</fullName>
    </alternativeName>
</protein>
<evidence type="ECO:0000255" key="1">
    <source>
        <dbReference type="HAMAP-Rule" id="MF_01342"/>
    </source>
</evidence>
<evidence type="ECO:0000256" key="2">
    <source>
        <dbReference type="SAM" id="MobiDB-lite"/>
    </source>
</evidence>
<evidence type="ECO:0000305" key="3"/>
<accession>A6TWH5</accession>
<gene>
    <name evidence="1" type="primary">rplP</name>
    <name type="ordered locus">Amet_4471</name>
</gene>
<dbReference type="EMBL" id="CP000724">
    <property type="protein sequence ID" value="ABR50543.1"/>
    <property type="molecule type" value="Genomic_DNA"/>
</dbReference>
<dbReference type="RefSeq" id="WP_012065434.1">
    <property type="nucleotide sequence ID" value="NC_009633.1"/>
</dbReference>
<dbReference type="SMR" id="A6TWH5"/>
<dbReference type="STRING" id="293826.Amet_4471"/>
<dbReference type="KEGG" id="amt:Amet_4471"/>
<dbReference type="eggNOG" id="COG0197">
    <property type="taxonomic scope" value="Bacteria"/>
</dbReference>
<dbReference type="HOGENOM" id="CLU_078858_2_1_9"/>
<dbReference type="OrthoDB" id="9802589at2"/>
<dbReference type="Proteomes" id="UP000001572">
    <property type="component" value="Chromosome"/>
</dbReference>
<dbReference type="GO" id="GO:0022625">
    <property type="term" value="C:cytosolic large ribosomal subunit"/>
    <property type="evidence" value="ECO:0007669"/>
    <property type="project" value="TreeGrafter"/>
</dbReference>
<dbReference type="GO" id="GO:0019843">
    <property type="term" value="F:rRNA binding"/>
    <property type="evidence" value="ECO:0007669"/>
    <property type="project" value="UniProtKB-UniRule"/>
</dbReference>
<dbReference type="GO" id="GO:0003735">
    <property type="term" value="F:structural constituent of ribosome"/>
    <property type="evidence" value="ECO:0007669"/>
    <property type="project" value="InterPro"/>
</dbReference>
<dbReference type="GO" id="GO:0000049">
    <property type="term" value="F:tRNA binding"/>
    <property type="evidence" value="ECO:0007669"/>
    <property type="project" value="UniProtKB-KW"/>
</dbReference>
<dbReference type="GO" id="GO:0006412">
    <property type="term" value="P:translation"/>
    <property type="evidence" value="ECO:0007669"/>
    <property type="project" value="UniProtKB-UniRule"/>
</dbReference>
<dbReference type="CDD" id="cd01433">
    <property type="entry name" value="Ribosomal_L16_L10e"/>
    <property type="match status" value="1"/>
</dbReference>
<dbReference type="FunFam" id="3.90.1170.10:FF:000001">
    <property type="entry name" value="50S ribosomal protein L16"/>
    <property type="match status" value="1"/>
</dbReference>
<dbReference type="Gene3D" id="3.90.1170.10">
    <property type="entry name" value="Ribosomal protein L10e/L16"/>
    <property type="match status" value="1"/>
</dbReference>
<dbReference type="HAMAP" id="MF_01342">
    <property type="entry name" value="Ribosomal_uL16"/>
    <property type="match status" value="1"/>
</dbReference>
<dbReference type="InterPro" id="IPR047873">
    <property type="entry name" value="Ribosomal_uL16"/>
</dbReference>
<dbReference type="InterPro" id="IPR000114">
    <property type="entry name" value="Ribosomal_uL16_bact-type"/>
</dbReference>
<dbReference type="InterPro" id="IPR020798">
    <property type="entry name" value="Ribosomal_uL16_CS"/>
</dbReference>
<dbReference type="InterPro" id="IPR016180">
    <property type="entry name" value="Ribosomal_uL16_dom"/>
</dbReference>
<dbReference type="InterPro" id="IPR036920">
    <property type="entry name" value="Ribosomal_uL16_sf"/>
</dbReference>
<dbReference type="NCBIfam" id="TIGR01164">
    <property type="entry name" value="rplP_bact"/>
    <property type="match status" value="1"/>
</dbReference>
<dbReference type="PANTHER" id="PTHR12220">
    <property type="entry name" value="50S/60S RIBOSOMAL PROTEIN L16"/>
    <property type="match status" value="1"/>
</dbReference>
<dbReference type="PANTHER" id="PTHR12220:SF13">
    <property type="entry name" value="LARGE RIBOSOMAL SUBUNIT PROTEIN UL16M"/>
    <property type="match status" value="1"/>
</dbReference>
<dbReference type="Pfam" id="PF00252">
    <property type="entry name" value="Ribosomal_L16"/>
    <property type="match status" value="1"/>
</dbReference>
<dbReference type="PRINTS" id="PR00060">
    <property type="entry name" value="RIBOSOMALL16"/>
</dbReference>
<dbReference type="SUPFAM" id="SSF54686">
    <property type="entry name" value="Ribosomal protein L16p/L10e"/>
    <property type="match status" value="1"/>
</dbReference>
<dbReference type="PROSITE" id="PS00586">
    <property type="entry name" value="RIBOSOMAL_L16_1"/>
    <property type="match status" value="1"/>
</dbReference>
<dbReference type="PROSITE" id="PS00701">
    <property type="entry name" value="RIBOSOMAL_L16_2"/>
    <property type="match status" value="1"/>
</dbReference>